<gene>
    <name evidence="3" type="primary">fdh</name>
    <name type="ORF">99H12.160</name>
    <name type="ORF">NCU03813</name>
</gene>
<accession>Q07103</accession>
<accession>Q7RVC9</accession>
<reference key="1">
    <citation type="journal article" date="1993" name="J. Bacteriol.">
        <title>Developmental regulation of the gene for formate dehydrogenase in Neurospora crassa.</title>
        <authorList>
            <person name="Chow C.M."/>
            <person name="RajBhandary U.L."/>
        </authorList>
    </citation>
    <scope>NUCLEOTIDE SEQUENCE [GENOMIC DNA]</scope>
    <scope>DEVELOPMENTAL STAGE</scope>
    <source>
        <strain>ATCC 24698 / 74-OR23-1A / CBS 708.71 / DSM 1257 / FGSC 987</strain>
    </source>
</reference>
<reference key="2">
    <citation type="journal article" date="2003" name="Nucleic Acids Res.">
        <title>What's in the genome of a filamentous fungus? Analysis of the Neurospora genome sequence.</title>
        <authorList>
            <person name="Mannhaupt G."/>
            <person name="Montrone C."/>
            <person name="Haase D."/>
            <person name="Mewes H.-W."/>
            <person name="Aign V."/>
            <person name="Hoheisel J.D."/>
            <person name="Fartmann B."/>
            <person name="Nyakatura G."/>
            <person name="Kempken F."/>
            <person name="Maier J."/>
            <person name="Schulte U."/>
        </authorList>
    </citation>
    <scope>NUCLEOTIDE SEQUENCE [LARGE SCALE GENOMIC DNA]</scope>
    <source>
        <strain>ATCC 24698 / 74-OR23-1A / CBS 708.71 / DSM 1257 / FGSC 987</strain>
    </source>
</reference>
<reference key="3">
    <citation type="journal article" date="2003" name="Nature">
        <title>The genome sequence of the filamentous fungus Neurospora crassa.</title>
        <authorList>
            <person name="Galagan J.E."/>
            <person name="Calvo S.E."/>
            <person name="Borkovich K.A."/>
            <person name="Selker E.U."/>
            <person name="Read N.D."/>
            <person name="Jaffe D.B."/>
            <person name="FitzHugh W."/>
            <person name="Ma L.-J."/>
            <person name="Smirnov S."/>
            <person name="Purcell S."/>
            <person name="Rehman B."/>
            <person name="Elkins T."/>
            <person name="Engels R."/>
            <person name="Wang S."/>
            <person name="Nielsen C.B."/>
            <person name="Butler J."/>
            <person name="Endrizzi M."/>
            <person name="Qui D."/>
            <person name="Ianakiev P."/>
            <person name="Bell-Pedersen D."/>
            <person name="Nelson M.A."/>
            <person name="Werner-Washburne M."/>
            <person name="Selitrennikoff C.P."/>
            <person name="Kinsey J.A."/>
            <person name="Braun E.L."/>
            <person name="Zelter A."/>
            <person name="Schulte U."/>
            <person name="Kothe G.O."/>
            <person name="Jedd G."/>
            <person name="Mewes H.-W."/>
            <person name="Staben C."/>
            <person name="Marcotte E."/>
            <person name="Greenberg D."/>
            <person name="Roy A."/>
            <person name="Foley K."/>
            <person name="Naylor J."/>
            <person name="Stange-Thomann N."/>
            <person name="Barrett R."/>
            <person name="Gnerre S."/>
            <person name="Kamal M."/>
            <person name="Kamvysselis M."/>
            <person name="Mauceli E.W."/>
            <person name="Bielke C."/>
            <person name="Rudd S."/>
            <person name="Frishman D."/>
            <person name="Krystofova S."/>
            <person name="Rasmussen C."/>
            <person name="Metzenberg R.L."/>
            <person name="Perkins D.D."/>
            <person name="Kroken S."/>
            <person name="Cogoni C."/>
            <person name="Macino G."/>
            <person name="Catcheside D.E.A."/>
            <person name="Li W."/>
            <person name="Pratt R.J."/>
            <person name="Osmani S.A."/>
            <person name="DeSouza C.P.C."/>
            <person name="Glass N.L."/>
            <person name="Orbach M.J."/>
            <person name="Berglund J.A."/>
            <person name="Voelker R."/>
            <person name="Yarden O."/>
            <person name="Plamann M."/>
            <person name="Seiler S."/>
            <person name="Dunlap J.C."/>
            <person name="Radford A."/>
            <person name="Aramayo R."/>
            <person name="Natvig D.O."/>
            <person name="Alex L.A."/>
            <person name="Mannhaupt G."/>
            <person name="Ebbole D.J."/>
            <person name="Freitag M."/>
            <person name="Paulsen I."/>
            <person name="Sachs M.S."/>
            <person name="Lander E.S."/>
            <person name="Nusbaum C."/>
            <person name="Birren B.W."/>
        </authorList>
    </citation>
    <scope>NUCLEOTIDE SEQUENCE [LARGE SCALE GENOMIC DNA]</scope>
    <source>
        <strain>ATCC 24698 / 74-OR23-1A / CBS 708.71 / DSM 1257 / FGSC 987</strain>
    </source>
</reference>
<protein>
    <recommendedName>
        <fullName evidence="1 3">Formate dehydrogenase</fullName>
        <shortName evidence="1">FDH</shortName>
        <ecNumber evidence="1">1.17.1.9</ecNumber>
    </recommendedName>
    <alternativeName>
        <fullName evidence="1">NAD-dependent formate dehydrogenase</fullName>
    </alternativeName>
</protein>
<dbReference type="EC" id="1.17.1.9" evidence="1"/>
<dbReference type="EMBL" id="L13964">
    <property type="protein sequence ID" value="AAA99900.1"/>
    <property type="molecule type" value="Genomic_DNA"/>
</dbReference>
<dbReference type="EMBL" id="AL451018">
    <property type="protein sequence ID" value="CAC18252.1"/>
    <property type="molecule type" value="Genomic_DNA"/>
</dbReference>
<dbReference type="EMBL" id="CM002240">
    <property type="protein sequence ID" value="EAA31966.1"/>
    <property type="molecule type" value="Genomic_DNA"/>
</dbReference>
<dbReference type="PIR" id="A47117">
    <property type="entry name" value="A47117"/>
</dbReference>
<dbReference type="RefSeq" id="XP_961202.1">
    <property type="nucleotide sequence ID" value="XM_956109.3"/>
</dbReference>
<dbReference type="SMR" id="Q07103"/>
<dbReference type="FunCoup" id="Q07103">
    <property type="interactions" value="443"/>
</dbReference>
<dbReference type="STRING" id="367110.Q07103"/>
<dbReference type="PaxDb" id="5141-EFNCRP00000003500"/>
<dbReference type="EnsemblFungi" id="EAA31966">
    <property type="protein sequence ID" value="EAA31966"/>
    <property type="gene ID" value="NCU03813"/>
</dbReference>
<dbReference type="GeneID" id="3877330"/>
<dbReference type="KEGG" id="ncr:NCU03813"/>
<dbReference type="VEuPathDB" id="FungiDB:NCU03813"/>
<dbReference type="HOGENOM" id="CLU_019796_0_0_1"/>
<dbReference type="InParanoid" id="Q07103"/>
<dbReference type="OMA" id="HYTDRHR"/>
<dbReference type="OrthoDB" id="418179at2759"/>
<dbReference type="Proteomes" id="UP000001805">
    <property type="component" value="Chromosome 2, Linkage Group V"/>
</dbReference>
<dbReference type="GO" id="GO:0005829">
    <property type="term" value="C:cytosol"/>
    <property type="evidence" value="ECO:0000318"/>
    <property type="project" value="GO_Central"/>
</dbReference>
<dbReference type="GO" id="GO:0008863">
    <property type="term" value="F:formate dehydrogenase (NAD+) activity"/>
    <property type="evidence" value="ECO:0000318"/>
    <property type="project" value="GO_Central"/>
</dbReference>
<dbReference type="GO" id="GO:0051287">
    <property type="term" value="F:NAD binding"/>
    <property type="evidence" value="ECO:0007669"/>
    <property type="project" value="InterPro"/>
</dbReference>
<dbReference type="GO" id="GO:0016616">
    <property type="term" value="F:oxidoreductase activity, acting on the CH-OH group of donors, NAD or NADP as acceptor"/>
    <property type="evidence" value="ECO:0007669"/>
    <property type="project" value="InterPro"/>
</dbReference>
<dbReference type="GO" id="GO:0042183">
    <property type="term" value="P:formate catabolic process"/>
    <property type="evidence" value="ECO:0007669"/>
    <property type="project" value="UniProtKB-UniRule"/>
</dbReference>
<dbReference type="CDD" id="cd05302">
    <property type="entry name" value="FDH"/>
    <property type="match status" value="1"/>
</dbReference>
<dbReference type="FunFam" id="3.40.50.720:FF:000057">
    <property type="entry name" value="Formate dehydrogenase"/>
    <property type="match status" value="1"/>
</dbReference>
<dbReference type="Gene3D" id="3.40.50.720">
    <property type="entry name" value="NAD(P)-binding Rossmann-like Domain"/>
    <property type="match status" value="2"/>
</dbReference>
<dbReference type="HAMAP" id="MF_03210">
    <property type="entry name" value="Formate_dehydrogenase"/>
    <property type="match status" value="1"/>
</dbReference>
<dbReference type="InterPro" id="IPR006139">
    <property type="entry name" value="D-isomer_2_OHA_DH_cat_dom"/>
</dbReference>
<dbReference type="InterPro" id="IPR029753">
    <property type="entry name" value="D-isomer_DH_CS"/>
</dbReference>
<dbReference type="InterPro" id="IPR029752">
    <property type="entry name" value="D-isomer_DH_CS1"/>
</dbReference>
<dbReference type="InterPro" id="IPR006140">
    <property type="entry name" value="D-isomer_DH_NAD-bd"/>
</dbReference>
<dbReference type="InterPro" id="IPR033689">
    <property type="entry name" value="FDH_NAD-dep"/>
</dbReference>
<dbReference type="InterPro" id="IPR036291">
    <property type="entry name" value="NAD(P)-bd_dom_sf"/>
</dbReference>
<dbReference type="NCBIfam" id="NF005750">
    <property type="entry name" value="PRK07574.1"/>
    <property type="match status" value="1"/>
</dbReference>
<dbReference type="PANTHER" id="PTHR42938">
    <property type="entry name" value="FORMATE DEHYDROGENASE 1"/>
    <property type="match status" value="1"/>
</dbReference>
<dbReference type="PANTHER" id="PTHR42938:SF9">
    <property type="entry name" value="FORMATE DEHYDROGENASE 1"/>
    <property type="match status" value="1"/>
</dbReference>
<dbReference type="Pfam" id="PF00389">
    <property type="entry name" value="2-Hacid_dh"/>
    <property type="match status" value="1"/>
</dbReference>
<dbReference type="Pfam" id="PF02826">
    <property type="entry name" value="2-Hacid_dh_C"/>
    <property type="match status" value="1"/>
</dbReference>
<dbReference type="SUPFAM" id="SSF52283">
    <property type="entry name" value="Formate/glycerate dehydrogenase catalytic domain-like"/>
    <property type="match status" value="1"/>
</dbReference>
<dbReference type="SUPFAM" id="SSF51735">
    <property type="entry name" value="NAD(P)-binding Rossmann-fold domains"/>
    <property type="match status" value="1"/>
</dbReference>
<dbReference type="PROSITE" id="PS00065">
    <property type="entry name" value="D_2_HYDROXYACID_DH_1"/>
    <property type="match status" value="1"/>
</dbReference>
<dbReference type="PROSITE" id="PS00670">
    <property type="entry name" value="D_2_HYDROXYACID_DH_2"/>
    <property type="match status" value="1"/>
</dbReference>
<dbReference type="PROSITE" id="PS00671">
    <property type="entry name" value="D_2_HYDROXYACID_DH_3"/>
    <property type="match status" value="1"/>
</dbReference>
<proteinExistence type="evidence at transcript level"/>
<feature type="chain" id="PRO_0000076026" description="Formate dehydrogenase">
    <location>
        <begin position="1"/>
        <end position="375"/>
    </location>
</feature>
<feature type="binding site" evidence="1">
    <location>
        <position position="94"/>
    </location>
    <ligand>
        <name>substrate</name>
    </ligand>
</feature>
<feature type="binding site" evidence="1">
    <location>
        <position position="120"/>
    </location>
    <ligand>
        <name>substrate</name>
    </ligand>
</feature>
<feature type="binding site" evidence="1">
    <location>
        <begin position="175"/>
        <end position="176"/>
    </location>
    <ligand>
        <name>NAD(+)</name>
        <dbReference type="ChEBI" id="CHEBI:57540"/>
    </ligand>
</feature>
<feature type="binding site" evidence="1">
    <location>
        <position position="196"/>
    </location>
    <ligand>
        <name>NAD(+)</name>
        <dbReference type="ChEBI" id="CHEBI:57540"/>
    </ligand>
</feature>
<feature type="binding site" evidence="1">
    <location>
        <begin position="231"/>
        <end position="235"/>
    </location>
    <ligand>
        <name>NAD(+)</name>
        <dbReference type="ChEBI" id="CHEBI:57540"/>
    </ligand>
</feature>
<feature type="binding site" evidence="1">
    <location>
        <position position="257"/>
    </location>
    <ligand>
        <name>NAD(+)</name>
        <dbReference type="ChEBI" id="CHEBI:57540"/>
    </ligand>
</feature>
<feature type="binding site" evidence="1">
    <location>
        <position position="283"/>
    </location>
    <ligand>
        <name>NAD(+)</name>
        <dbReference type="ChEBI" id="CHEBI:57540"/>
    </ligand>
</feature>
<feature type="binding site" evidence="1">
    <location>
        <begin position="312"/>
        <end position="315"/>
    </location>
    <ligand>
        <name>NAD(+)</name>
        <dbReference type="ChEBI" id="CHEBI:57540"/>
    </ligand>
</feature>
<feature type="binding site" evidence="1">
    <location>
        <position position="358"/>
    </location>
    <ligand>
        <name>NAD(+)</name>
        <dbReference type="ChEBI" id="CHEBI:57540"/>
    </ligand>
</feature>
<feature type="site" description="Important for catalytic activity" evidence="1">
    <location>
        <position position="259"/>
    </location>
</feature>
<feature type="site" description="Important for catalytic activity" evidence="1">
    <location>
        <position position="312"/>
    </location>
</feature>
<name>FDH_NEUCR</name>
<organism>
    <name type="scientific">Neurospora crassa (strain ATCC 24698 / 74-OR23-1A / CBS 708.71 / DSM 1257 / FGSC 987)</name>
    <dbReference type="NCBI Taxonomy" id="367110"/>
    <lineage>
        <taxon>Eukaryota</taxon>
        <taxon>Fungi</taxon>
        <taxon>Dikarya</taxon>
        <taxon>Ascomycota</taxon>
        <taxon>Pezizomycotina</taxon>
        <taxon>Sordariomycetes</taxon>
        <taxon>Sordariomycetidae</taxon>
        <taxon>Sordariales</taxon>
        <taxon>Sordariaceae</taxon>
        <taxon>Neurospora</taxon>
    </lineage>
</organism>
<sequence>MVKVLAVLYDGGKHGEEVPELLGTIQNELGLRKWLEDQGHTLVTTCDKDGENSTFDKELEDAEIIITTPFHPGYLTAERLARAKKLKLAVTAGIGSDHVDLNAANKTNGGITVAEVTGSNVVSVAEHVLMTILVLVRNFVPAHEQIQEGRWDVAEAAKNEFDLEGKVVGTVGVGRIGERVLRRLKPFDCKELLYYDYQPLSAEKEAEIGCRRVADLEEMLAQCDVVTINCPLHEKTQGLFNKELISKMKKGSWLVNTARGAIVVKEDVAEALKSGHLRGYGGDVWFPQPAPQDHPLRYAKNPFGGGNAMVPHMSGTSLDAQKRYAAGTKAIIESYLSGKHDYRPEDLIVYGGDYATKSYGERERAKAAAAAAKSA</sequence>
<evidence type="ECO:0000255" key="1">
    <source>
        <dbReference type="HAMAP-Rule" id="MF_03210"/>
    </source>
</evidence>
<evidence type="ECO:0000269" key="2">
    <source>
    </source>
</evidence>
<evidence type="ECO:0000303" key="3">
    <source>
    </source>
</evidence>
<keyword id="KW-0963">Cytoplasm</keyword>
<keyword id="KW-0520">NAD</keyword>
<keyword id="KW-0560">Oxidoreductase</keyword>
<keyword id="KW-1185">Reference proteome</keyword>
<comment type="function">
    <text evidence="1">Catalyzes the NAD(+)-dependent oxidation of formate to carbon dioxide. Formate oxidation is the final step in the methanol oxidation pathway in methylotrophic microorganisms. Has a role in the detoxification of exogenous formate in non-methylotrophic organisms.</text>
</comment>
<comment type="catalytic activity">
    <reaction evidence="1">
        <text>formate + NAD(+) = CO2 + NADH</text>
        <dbReference type="Rhea" id="RHEA:15985"/>
        <dbReference type="ChEBI" id="CHEBI:15740"/>
        <dbReference type="ChEBI" id="CHEBI:16526"/>
        <dbReference type="ChEBI" id="CHEBI:57540"/>
        <dbReference type="ChEBI" id="CHEBI:57945"/>
        <dbReference type="EC" id="1.17.1.9"/>
    </reaction>
</comment>
<comment type="subunit">
    <text evidence="1">Homodimer.</text>
</comment>
<comment type="subcellular location">
    <subcellularLocation>
        <location evidence="1">Cytoplasm</location>
    </subcellularLocation>
</comment>
<comment type="developmental stage">
    <text evidence="2">Developmentally regulated. Expressed only during conidiation and early germination.</text>
</comment>
<comment type="similarity">
    <text evidence="1">Belongs to the D-isomer specific 2-hydroxyacid dehydrogenase family. FDH subfamily.</text>
</comment>